<gene>
    <name evidence="1" type="primary">nfo</name>
    <name type="ordered locus">Caur_1056</name>
</gene>
<proteinExistence type="inferred from homology"/>
<dbReference type="EC" id="3.1.21.2" evidence="1"/>
<dbReference type="EMBL" id="CP000909">
    <property type="protein sequence ID" value="ABY34288.1"/>
    <property type="molecule type" value="Genomic_DNA"/>
</dbReference>
<dbReference type="RefSeq" id="WP_012256944.1">
    <property type="nucleotide sequence ID" value="NC_010175.1"/>
</dbReference>
<dbReference type="RefSeq" id="YP_001634677.1">
    <property type="nucleotide sequence ID" value="NC_010175.1"/>
</dbReference>
<dbReference type="SMR" id="A9WII8"/>
<dbReference type="FunCoup" id="A9WII8">
    <property type="interactions" value="132"/>
</dbReference>
<dbReference type="STRING" id="324602.Caur_1056"/>
<dbReference type="EnsemblBacteria" id="ABY34288">
    <property type="protein sequence ID" value="ABY34288"/>
    <property type="gene ID" value="Caur_1056"/>
</dbReference>
<dbReference type="KEGG" id="cau:Caur_1056"/>
<dbReference type="PATRIC" id="fig|324602.8.peg.1204"/>
<dbReference type="eggNOG" id="COG0648">
    <property type="taxonomic scope" value="Bacteria"/>
</dbReference>
<dbReference type="HOGENOM" id="CLU_025885_0_1_0"/>
<dbReference type="InParanoid" id="A9WII8"/>
<dbReference type="Proteomes" id="UP000002008">
    <property type="component" value="Chromosome"/>
</dbReference>
<dbReference type="GO" id="GO:0008833">
    <property type="term" value="F:deoxyribonuclease IV (phage-T4-induced) activity"/>
    <property type="evidence" value="ECO:0007669"/>
    <property type="project" value="UniProtKB-UniRule"/>
</dbReference>
<dbReference type="GO" id="GO:0003677">
    <property type="term" value="F:DNA binding"/>
    <property type="evidence" value="ECO:0007669"/>
    <property type="project" value="InterPro"/>
</dbReference>
<dbReference type="GO" id="GO:0003906">
    <property type="term" value="F:DNA-(apurinic or apyrimidinic site) endonuclease activity"/>
    <property type="evidence" value="ECO:0000318"/>
    <property type="project" value="GO_Central"/>
</dbReference>
<dbReference type="GO" id="GO:0008081">
    <property type="term" value="F:phosphoric diester hydrolase activity"/>
    <property type="evidence" value="ECO:0000318"/>
    <property type="project" value="GO_Central"/>
</dbReference>
<dbReference type="GO" id="GO:0008270">
    <property type="term" value="F:zinc ion binding"/>
    <property type="evidence" value="ECO:0007669"/>
    <property type="project" value="UniProtKB-UniRule"/>
</dbReference>
<dbReference type="GO" id="GO:0006284">
    <property type="term" value="P:base-excision repair"/>
    <property type="evidence" value="ECO:0000318"/>
    <property type="project" value="GO_Central"/>
</dbReference>
<dbReference type="CDD" id="cd00019">
    <property type="entry name" value="AP2Ec"/>
    <property type="match status" value="1"/>
</dbReference>
<dbReference type="FunFam" id="3.20.20.150:FF:000001">
    <property type="entry name" value="Probable endonuclease 4"/>
    <property type="match status" value="1"/>
</dbReference>
<dbReference type="Gene3D" id="3.20.20.150">
    <property type="entry name" value="Divalent-metal-dependent TIM barrel enzymes"/>
    <property type="match status" value="1"/>
</dbReference>
<dbReference type="HAMAP" id="MF_00152">
    <property type="entry name" value="Nfo"/>
    <property type="match status" value="1"/>
</dbReference>
<dbReference type="InterPro" id="IPR001719">
    <property type="entry name" value="AP_endonuc_2"/>
</dbReference>
<dbReference type="InterPro" id="IPR018246">
    <property type="entry name" value="AP_endonuc_F2_Zn_BS"/>
</dbReference>
<dbReference type="InterPro" id="IPR036237">
    <property type="entry name" value="Xyl_isomerase-like_sf"/>
</dbReference>
<dbReference type="InterPro" id="IPR013022">
    <property type="entry name" value="Xyl_isomerase-like_TIM-brl"/>
</dbReference>
<dbReference type="NCBIfam" id="TIGR00587">
    <property type="entry name" value="nfo"/>
    <property type="match status" value="1"/>
</dbReference>
<dbReference type="PANTHER" id="PTHR21445:SF0">
    <property type="entry name" value="APURINIC-APYRIMIDINIC ENDONUCLEASE"/>
    <property type="match status" value="1"/>
</dbReference>
<dbReference type="PANTHER" id="PTHR21445">
    <property type="entry name" value="ENDONUCLEASE IV ENDODEOXYRIBONUCLEASE IV"/>
    <property type="match status" value="1"/>
</dbReference>
<dbReference type="Pfam" id="PF01261">
    <property type="entry name" value="AP_endonuc_2"/>
    <property type="match status" value="1"/>
</dbReference>
<dbReference type="SMART" id="SM00518">
    <property type="entry name" value="AP2Ec"/>
    <property type="match status" value="1"/>
</dbReference>
<dbReference type="SUPFAM" id="SSF51658">
    <property type="entry name" value="Xylose isomerase-like"/>
    <property type="match status" value="1"/>
</dbReference>
<dbReference type="PROSITE" id="PS00729">
    <property type="entry name" value="AP_NUCLEASE_F2_1"/>
    <property type="match status" value="1"/>
</dbReference>
<dbReference type="PROSITE" id="PS00730">
    <property type="entry name" value="AP_NUCLEASE_F2_2"/>
    <property type="match status" value="1"/>
</dbReference>
<dbReference type="PROSITE" id="PS00731">
    <property type="entry name" value="AP_NUCLEASE_F2_3"/>
    <property type="match status" value="1"/>
</dbReference>
<dbReference type="PROSITE" id="PS51432">
    <property type="entry name" value="AP_NUCLEASE_F2_4"/>
    <property type="match status" value="1"/>
</dbReference>
<comment type="function">
    <text evidence="1">Endonuclease IV plays a role in DNA repair. It cleaves phosphodiester bonds at apurinic or apyrimidinic (AP) sites, generating a 3'-hydroxyl group and a 5'-terminal sugar phosphate.</text>
</comment>
<comment type="catalytic activity">
    <reaction evidence="1">
        <text>Endonucleolytic cleavage to 5'-phosphooligonucleotide end-products.</text>
        <dbReference type="EC" id="3.1.21.2"/>
    </reaction>
</comment>
<comment type="cofactor">
    <cofactor evidence="1">
        <name>Zn(2+)</name>
        <dbReference type="ChEBI" id="CHEBI:29105"/>
    </cofactor>
    <text evidence="1">Binds 3 Zn(2+) ions.</text>
</comment>
<comment type="similarity">
    <text evidence="1">Belongs to the AP endonuclease 2 family.</text>
</comment>
<feature type="chain" id="PRO_1000076801" description="Probable endonuclease 4">
    <location>
        <begin position="1"/>
        <end position="285"/>
    </location>
</feature>
<feature type="binding site" evidence="1">
    <location>
        <position position="67"/>
    </location>
    <ligand>
        <name>Zn(2+)</name>
        <dbReference type="ChEBI" id="CHEBI:29105"/>
        <label>1</label>
    </ligand>
</feature>
<feature type="binding site" evidence="1">
    <location>
        <position position="107"/>
    </location>
    <ligand>
        <name>Zn(2+)</name>
        <dbReference type="ChEBI" id="CHEBI:29105"/>
        <label>1</label>
    </ligand>
</feature>
<feature type="binding site" evidence="1">
    <location>
        <position position="144"/>
    </location>
    <ligand>
        <name>Zn(2+)</name>
        <dbReference type="ChEBI" id="CHEBI:29105"/>
        <label>1</label>
    </ligand>
</feature>
<feature type="binding site" evidence="1">
    <location>
        <position position="144"/>
    </location>
    <ligand>
        <name>Zn(2+)</name>
        <dbReference type="ChEBI" id="CHEBI:29105"/>
        <label>2</label>
    </ligand>
</feature>
<feature type="binding site" evidence="1">
    <location>
        <position position="178"/>
    </location>
    <ligand>
        <name>Zn(2+)</name>
        <dbReference type="ChEBI" id="CHEBI:29105"/>
        <label>2</label>
    </ligand>
</feature>
<feature type="binding site" evidence="1">
    <location>
        <position position="181"/>
    </location>
    <ligand>
        <name>Zn(2+)</name>
        <dbReference type="ChEBI" id="CHEBI:29105"/>
        <label>3</label>
    </ligand>
</feature>
<feature type="binding site" evidence="1">
    <location>
        <position position="215"/>
    </location>
    <ligand>
        <name>Zn(2+)</name>
        <dbReference type="ChEBI" id="CHEBI:29105"/>
        <label>2</label>
    </ligand>
</feature>
<feature type="binding site" evidence="1">
    <location>
        <position position="228"/>
    </location>
    <ligand>
        <name>Zn(2+)</name>
        <dbReference type="ChEBI" id="CHEBI:29105"/>
        <label>3</label>
    </ligand>
</feature>
<feature type="binding site" evidence="1">
    <location>
        <position position="230"/>
    </location>
    <ligand>
        <name>Zn(2+)</name>
        <dbReference type="ChEBI" id="CHEBI:29105"/>
        <label>3</label>
    </ligand>
</feature>
<feature type="binding site" evidence="1">
    <location>
        <position position="260"/>
    </location>
    <ligand>
        <name>Zn(2+)</name>
        <dbReference type="ChEBI" id="CHEBI:29105"/>
        <label>2</label>
    </ligand>
</feature>
<protein>
    <recommendedName>
        <fullName evidence="1">Probable endonuclease 4</fullName>
        <ecNumber evidence="1">3.1.21.2</ecNumber>
    </recommendedName>
    <alternativeName>
        <fullName evidence="1">Endodeoxyribonuclease IV</fullName>
    </alternativeName>
    <alternativeName>
        <fullName evidence="1">Endonuclease IV</fullName>
    </alternativeName>
</protein>
<keyword id="KW-0227">DNA damage</keyword>
<keyword id="KW-0234">DNA repair</keyword>
<keyword id="KW-0255">Endonuclease</keyword>
<keyword id="KW-0378">Hydrolase</keyword>
<keyword id="KW-0479">Metal-binding</keyword>
<keyword id="KW-0540">Nuclease</keyword>
<keyword id="KW-1185">Reference proteome</keyword>
<keyword id="KW-0862">Zinc</keyword>
<accession>A9WII8</accession>
<evidence type="ECO:0000255" key="1">
    <source>
        <dbReference type="HAMAP-Rule" id="MF_00152"/>
    </source>
</evidence>
<name>END4_CHLAA</name>
<reference key="1">
    <citation type="journal article" date="2011" name="BMC Genomics">
        <title>Complete genome sequence of the filamentous anoxygenic phototrophic bacterium Chloroflexus aurantiacus.</title>
        <authorList>
            <person name="Tang K.H."/>
            <person name="Barry K."/>
            <person name="Chertkov O."/>
            <person name="Dalin E."/>
            <person name="Han C.S."/>
            <person name="Hauser L.J."/>
            <person name="Honchak B.M."/>
            <person name="Karbach L.E."/>
            <person name="Land M.L."/>
            <person name="Lapidus A."/>
            <person name="Larimer F.W."/>
            <person name="Mikhailova N."/>
            <person name="Pitluck S."/>
            <person name="Pierson B.K."/>
            <person name="Blankenship R.E."/>
        </authorList>
    </citation>
    <scope>NUCLEOTIDE SEQUENCE [LARGE SCALE GENOMIC DNA]</scope>
    <source>
        <strain>ATCC 29366 / DSM 635 / J-10-fl</strain>
    </source>
</reference>
<organism>
    <name type="scientific">Chloroflexus aurantiacus (strain ATCC 29366 / DSM 635 / J-10-fl)</name>
    <dbReference type="NCBI Taxonomy" id="324602"/>
    <lineage>
        <taxon>Bacteria</taxon>
        <taxon>Bacillati</taxon>
        <taxon>Chloroflexota</taxon>
        <taxon>Chloroflexia</taxon>
        <taxon>Chloroflexales</taxon>
        <taxon>Chloroflexineae</taxon>
        <taxon>Chloroflexaceae</taxon>
        <taxon>Chloroflexus</taxon>
    </lineage>
</organism>
<sequence length="285" mass="31302">MPRFGAHMSISGGVSKSFARGESVGLDSMQIFAKNERQWTAKPISPEEATAFRTEQQRTGIHPVVVHDSYLINLAAPADELREKSIAAFADELERCAQLDIPYLVTHPGAHTGIGEEAGLARVADAICRLLAEGVGGNTMILLETTAGQGTALGYRFEHLARLFELIPYHERLGICVDTCHIFAAGYDIRDPEGYQTTFAELDRLVGLTRVKCFHLNDSQKDLGSRVDRHAHIGQGCIGVEAFRMLVNDPRFADLPMIIETPKGEDMAEDRMNLALLRSLVQGAE</sequence>